<name>STMN3_RAT</name>
<organism>
    <name type="scientific">Rattus norvegicus</name>
    <name type="common">Rat</name>
    <dbReference type="NCBI Taxonomy" id="10116"/>
    <lineage>
        <taxon>Eukaryota</taxon>
        <taxon>Metazoa</taxon>
        <taxon>Chordata</taxon>
        <taxon>Craniata</taxon>
        <taxon>Vertebrata</taxon>
        <taxon>Euteleostomi</taxon>
        <taxon>Mammalia</taxon>
        <taxon>Eutheria</taxon>
        <taxon>Euarchontoglires</taxon>
        <taxon>Glires</taxon>
        <taxon>Rodentia</taxon>
        <taxon>Myomorpha</taxon>
        <taxon>Muroidea</taxon>
        <taxon>Muridae</taxon>
        <taxon>Murinae</taxon>
        <taxon>Rattus</taxon>
    </lineage>
</organism>
<gene>
    <name type="primary">Stmn3</name>
    <name type="synonym">Sclip</name>
</gene>
<accession>Q9JHU6</accession>
<feature type="chain" id="PRO_0000182404" description="Stathmin-3">
    <location>
        <begin position="1"/>
        <end position="180"/>
    </location>
</feature>
<feature type="domain" description="SLD" evidence="4">
    <location>
        <begin position="38"/>
        <end position="180"/>
    </location>
</feature>
<feature type="region of interest" description="Disordered" evidence="5">
    <location>
        <begin position="58"/>
        <end position="81"/>
    </location>
</feature>
<feature type="coiled-coil region" evidence="3">
    <location>
        <begin position="75"/>
        <end position="179"/>
    </location>
</feature>
<feature type="compositionally biased region" description="Low complexity" evidence="5">
    <location>
        <begin position="60"/>
        <end position="74"/>
    </location>
</feature>
<feature type="modified residue" description="Phosphoserine" evidence="2">
    <location>
        <position position="50"/>
    </location>
</feature>
<feature type="modified residue" description="Phosphoserine" evidence="2">
    <location>
        <position position="60"/>
    </location>
</feature>
<feature type="modified residue" description="Phosphoserine" evidence="8">
    <location>
        <position position="65"/>
    </location>
</feature>
<feature type="modified residue" description="Phosphoserine" evidence="8">
    <location>
        <position position="68"/>
    </location>
</feature>
<feature type="modified residue" description="Phosphoserine" evidence="2">
    <location>
        <position position="72"/>
    </location>
</feature>
<feature type="modified residue" description="Phosphoserine" evidence="2">
    <location>
        <position position="73"/>
    </location>
</feature>
<feature type="modified residue" description="Phosphoserine" evidence="8">
    <location>
        <position position="81"/>
    </location>
</feature>
<feature type="lipid moiety-binding region" description="S-palmitoyl cysteine" evidence="1">
    <location>
        <position position="22"/>
    </location>
</feature>
<feature type="lipid moiety-binding region" description="S-palmitoyl cysteine" evidence="1">
    <location>
        <position position="24"/>
    </location>
</feature>
<protein>
    <recommendedName>
        <fullName>Stathmin-3</fullName>
    </recommendedName>
    <alternativeName>
        <fullName>SCG10-like protein</fullName>
    </alternativeName>
</protein>
<reference key="1">
    <citation type="submission" date="2000-03" db="EMBL/GenBank/DDBJ databases">
        <title>Novel genes expression in rat brain.</title>
        <authorList>
            <person name="Xiao H."/>
            <person name="Huang Q."/>
            <person name="Zhang F."/>
            <person name="Yang Z."/>
            <person name="Chen Z."/>
            <person name="Han Z."/>
            <person name="Zhang X."/>
        </authorList>
    </citation>
    <scope>NUCLEOTIDE SEQUENCE [MRNA]</scope>
    <source>
        <tissue>Brain</tissue>
    </source>
</reference>
<reference key="2">
    <citation type="journal article" date="2005" name="Exp. Cell Res.">
        <title>Clusterin interacts with SCLIP (SCG10-like protein) and promotes neurite outgrowth of PC12 cells.</title>
        <authorList>
            <person name="Kang S.W."/>
            <person name="Shin Y.J."/>
            <person name="Shim Y.J."/>
            <person name="Jeong S.Y."/>
            <person name="Park I.S."/>
            <person name="Min B.H."/>
        </authorList>
    </citation>
    <scope>INTERACTION WITH CLU</scope>
    <scope>SUBCELLULAR LOCATION</scope>
</reference>
<reference key="3">
    <citation type="journal article" date="2012" name="Nat. Commun.">
        <title>Quantitative maps of protein phosphorylation sites across 14 different rat organs and tissues.</title>
        <authorList>
            <person name="Lundby A."/>
            <person name="Secher A."/>
            <person name="Lage K."/>
            <person name="Nordsborg N.B."/>
            <person name="Dmytriyev A."/>
            <person name="Lundby C."/>
            <person name="Olsen J.V."/>
        </authorList>
    </citation>
    <scope>PHOSPHORYLATION [LARGE SCALE ANALYSIS] AT SER-65; SER-68 AND SER-81</scope>
    <scope>IDENTIFICATION BY MASS SPECTROMETRY [LARGE SCALE ANALYSIS]</scope>
</reference>
<sequence>MASTVSAYKEKMKELSVLSLICSCFYSQPHPNTIYQYGDMEVKQLDKRASGQSFEVILKSPSDLSPESPVLSSPPKRKDASLEELQKRLEAAEERRKTQEAQVLKQLAERREHEREVLHKALEENNNFSPLAEEKLNYKMELSKEIREAHLAALRERLREKELHAAEVRRNKEQREEMSG</sequence>
<comment type="function">
    <text evidence="1">Exhibits microtubule-destabilizing activity, which is antagonized by STAT3.</text>
</comment>
<comment type="subunit">
    <text evidence="1 6">Interacts with STAT3. Interacts with CLU (secreted form); this interaction may act as an important modulator during neuronal differentiation (PubMed:16038898).</text>
</comment>
<comment type="subcellular location">
    <subcellularLocation>
        <location evidence="1">Golgi apparatus</location>
    </subcellularLocation>
    <subcellularLocation>
        <location evidence="1">Cell projection</location>
        <location evidence="1">Growth cone</location>
    </subcellularLocation>
    <subcellularLocation>
        <location evidence="1">Cell projection</location>
        <location evidence="1">Axon</location>
    </subcellularLocation>
    <subcellularLocation>
        <location evidence="6">Cytoplasm</location>
        <location evidence="6">Cytosol</location>
    </subcellularLocation>
</comment>
<comment type="tissue specificity">
    <text>Neuron specific.</text>
</comment>
<comment type="PTM">
    <text evidence="1">N-terminal palmitoylation promotes specific anchoring to the cytosolic leaflet of Golgi membranes and subsequent vesicular trafficking along dendrites and axons. Neuronal Stathmins are substrates for palmitoyltransferases ZDHHC3, ZDHHC7 and ZDHHC15 (By similarity).</text>
</comment>
<comment type="similarity">
    <text evidence="7">Belongs to the stathmin family.</text>
</comment>
<evidence type="ECO:0000250" key="1"/>
<evidence type="ECO:0000250" key="2">
    <source>
        <dbReference type="UniProtKB" id="O70166"/>
    </source>
</evidence>
<evidence type="ECO:0000255" key="3"/>
<evidence type="ECO:0000255" key="4">
    <source>
        <dbReference type="PROSITE-ProRule" id="PRU00998"/>
    </source>
</evidence>
<evidence type="ECO:0000256" key="5">
    <source>
        <dbReference type="SAM" id="MobiDB-lite"/>
    </source>
</evidence>
<evidence type="ECO:0000269" key="6">
    <source>
    </source>
</evidence>
<evidence type="ECO:0000305" key="7"/>
<evidence type="ECO:0007744" key="8">
    <source>
    </source>
</evidence>
<proteinExistence type="evidence at protein level"/>
<dbReference type="EMBL" id="AY004290">
    <property type="protein sequence ID" value="AAF86617.1"/>
    <property type="molecule type" value="mRNA"/>
</dbReference>
<dbReference type="RefSeq" id="NP_077322.1">
    <property type="nucleotide sequence ID" value="NM_024346.1"/>
</dbReference>
<dbReference type="SMR" id="Q9JHU6"/>
<dbReference type="BioGRID" id="247922">
    <property type="interactions" value="2"/>
</dbReference>
<dbReference type="FunCoup" id="Q9JHU6">
    <property type="interactions" value="153"/>
</dbReference>
<dbReference type="STRING" id="10116.ENSRNOP00000074686"/>
<dbReference type="iPTMnet" id="Q9JHU6"/>
<dbReference type="PhosphoSitePlus" id="Q9JHU6"/>
<dbReference type="SwissPalm" id="Q9JHU6"/>
<dbReference type="PaxDb" id="10116-ENSRNOP00000018697"/>
<dbReference type="AGR" id="RGD:3628"/>
<dbReference type="RGD" id="3628">
    <property type="gene designation" value="Stmn3"/>
</dbReference>
<dbReference type="eggNOG" id="KOG1280">
    <property type="taxonomic scope" value="Eukaryota"/>
</dbReference>
<dbReference type="InParanoid" id="Q9JHU6"/>
<dbReference type="PRO" id="PR:Q9JHU6"/>
<dbReference type="Proteomes" id="UP000002494">
    <property type="component" value="Unplaced"/>
</dbReference>
<dbReference type="GO" id="GO:0005737">
    <property type="term" value="C:cytoplasm"/>
    <property type="evidence" value="ECO:0000250"/>
    <property type="project" value="HGNC-UCL"/>
</dbReference>
<dbReference type="GO" id="GO:0005829">
    <property type="term" value="C:cytosol"/>
    <property type="evidence" value="ECO:0000314"/>
    <property type="project" value="UniProtKB"/>
</dbReference>
<dbReference type="GO" id="GO:0005794">
    <property type="term" value="C:Golgi apparatus"/>
    <property type="evidence" value="ECO:0007669"/>
    <property type="project" value="UniProtKB-SubCell"/>
</dbReference>
<dbReference type="GO" id="GO:0030426">
    <property type="term" value="C:growth cone"/>
    <property type="evidence" value="ECO:0007669"/>
    <property type="project" value="UniProtKB-SubCell"/>
</dbReference>
<dbReference type="GO" id="GO:0043005">
    <property type="term" value="C:neuron projection"/>
    <property type="evidence" value="ECO:0000318"/>
    <property type="project" value="GO_Central"/>
</dbReference>
<dbReference type="GO" id="GO:0048471">
    <property type="term" value="C:perinuclear region of cytoplasm"/>
    <property type="evidence" value="ECO:0000314"/>
    <property type="project" value="RGD"/>
</dbReference>
<dbReference type="GO" id="GO:0019904">
    <property type="term" value="F:protein domain specific binding"/>
    <property type="evidence" value="ECO:0000266"/>
    <property type="project" value="RGD"/>
</dbReference>
<dbReference type="GO" id="GO:0051087">
    <property type="term" value="F:protein-folding chaperone binding"/>
    <property type="evidence" value="ECO:0000353"/>
    <property type="project" value="RGD"/>
</dbReference>
<dbReference type="GO" id="GO:0015631">
    <property type="term" value="F:tubulin binding"/>
    <property type="evidence" value="ECO:0000318"/>
    <property type="project" value="GO_Central"/>
</dbReference>
<dbReference type="GO" id="GO:0001835">
    <property type="term" value="P:blastocyst hatching"/>
    <property type="evidence" value="ECO:0000266"/>
    <property type="project" value="RGD"/>
</dbReference>
<dbReference type="GO" id="GO:1990090">
    <property type="term" value="P:cellular response to nerve growth factor stimulus"/>
    <property type="evidence" value="ECO:0000270"/>
    <property type="project" value="RGD"/>
</dbReference>
<dbReference type="GO" id="GO:0031122">
    <property type="term" value="P:cytoplasmic microtubule organization"/>
    <property type="evidence" value="ECO:0000250"/>
    <property type="project" value="HGNC-UCL"/>
</dbReference>
<dbReference type="GO" id="GO:0007019">
    <property type="term" value="P:microtubule depolymerization"/>
    <property type="evidence" value="ECO:0000318"/>
    <property type="project" value="GO_Central"/>
</dbReference>
<dbReference type="GO" id="GO:0043409">
    <property type="term" value="P:negative regulation of MAPK cascade"/>
    <property type="evidence" value="ECO:0000314"/>
    <property type="project" value="HGNC-UCL"/>
</dbReference>
<dbReference type="GO" id="GO:0010977">
    <property type="term" value="P:negative regulation of neuron projection development"/>
    <property type="evidence" value="ECO:0000250"/>
    <property type="project" value="HGNC-UCL"/>
</dbReference>
<dbReference type="GO" id="GO:0035021">
    <property type="term" value="P:negative regulation of Rac protein signal transduction"/>
    <property type="evidence" value="ECO:0000250"/>
    <property type="project" value="HGNC-UCL"/>
</dbReference>
<dbReference type="GO" id="GO:0031175">
    <property type="term" value="P:neuron projection development"/>
    <property type="evidence" value="ECO:0000266"/>
    <property type="project" value="RGD"/>
</dbReference>
<dbReference type="GO" id="GO:0051493">
    <property type="term" value="P:regulation of cytoskeleton organization"/>
    <property type="evidence" value="ECO:0000250"/>
    <property type="project" value="HGNC-UCL"/>
</dbReference>
<dbReference type="GO" id="GO:0031110">
    <property type="term" value="P:regulation of microtubule polymerization or depolymerization"/>
    <property type="evidence" value="ECO:0000318"/>
    <property type="project" value="GO_Central"/>
</dbReference>
<dbReference type="Gene3D" id="6.10.280.30">
    <property type="match status" value="1"/>
</dbReference>
<dbReference type="InterPro" id="IPR030514">
    <property type="entry name" value="Stathmin_CS"/>
</dbReference>
<dbReference type="InterPro" id="IPR000956">
    <property type="entry name" value="Stathmin_fam"/>
</dbReference>
<dbReference type="InterPro" id="IPR036002">
    <property type="entry name" value="Stathmin_sf"/>
</dbReference>
<dbReference type="PANTHER" id="PTHR10104">
    <property type="entry name" value="STATHMIN"/>
    <property type="match status" value="1"/>
</dbReference>
<dbReference type="PANTHER" id="PTHR10104:SF17">
    <property type="entry name" value="STATHMIN-3"/>
    <property type="match status" value="1"/>
</dbReference>
<dbReference type="Pfam" id="PF00836">
    <property type="entry name" value="Stathmin"/>
    <property type="match status" value="1"/>
</dbReference>
<dbReference type="PIRSF" id="PIRSF002285">
    <property type="entry name" value="Stathmin"/>
    <property type="match status" value="1"/>
</dbReference>
<dbReference type="PRINTS" id="PR00345">
    <property type="entry name" value="STATHMIN"/>
</dbReference>
<dbReference type="SUPFAM" id="SSF101494">
    <property type="entry name" value="Stathmin"/>
    <property type="match status" value="1"/>
</dbReference>
<dbReference type="PROSITE" id="PS00563">
    <property type="entry name" value="STATHMIN_1"/>
    <property type="match status" value="1"/>
</dbReference>
<dbReference type="PROSITE" id="PS01041">
    <property type="entry name" value="STATHMIN_2"/>
    <property type="match status" value="1"/>
</dbReference>
<dbReference type="PROSITE" id="PS51663">
    <property type="entry name" value="STATHMIN_3"/>
    <property type="match status" value="1"/>
</dbReference>
<keyword id="KW-0966">Cell projection</keyword>
<keyword id="KW-0175">Coiled coil</keyword>
<keyword id="KW-0963">Cytoplasm</keyword>
<keyword id="KW-0333">Golgi apparatus</keyword>
<keyword id="KW-0449">Lipoprotein</keyword>
<keyword id="KW-0564">Palmitate</keyword>
<keyword id="KW-0597">Phosphoprotein</keyword>
<keyword id="KW-1185">Reference proteome</keyword>